<name>RS18_BORA1</name>
<proteinExistence type="inferred from homology"/>
<sequence length="90" mass="10683">MAFFGKRKEKRKFTQQNPLFKRRKFCRFTAAGVEEIDYKDLDTLRDFVQENGKIIPARLTGTRAIYQRQLDSAIKRARFLALLPYTDNHN</sequence>
<reference key="1">
    <citation type="journal article" date="2006" name="J. Bacteriol.">
        <title>Comparison of the genome sequence of the poultry pathogen Bordetella avium with those of B. bronchiseptica, B. pertussis, and B. parapertussis reveals extensive diversity in surface structures associated with host interaction.</title>
        <authorList>
            <person name="Sebaihia M."/>
            <person name="Preston A."/>
            <person name="Maskell D.J."/>
            <person name="Kuzmiak H."/>
            <person name="Connell T.D."/>
            <person name="King N.D."/>
            <person name="Orndorff P.E."/>
            <person name="Miyamoto D.M."/>
            <person name="Thomson N.R."/>
            <person name="Harris D."/>
            <person name="Goble A."/>
            <person name="Lord A."/>
            <person name="Murphy L."/>
            <person name="Quail M.A."/>
            <person name="Rutter S."/>
            <person name="Squares R."/>
            <person name="Squares S."/>
            <person name="Woodward J."/>
            <person name="Parkhill J."/>
            <person name="Temple L.M."/>
        </authorList>
    </citation>
    <scope>NUCLEOTIDE SEQUENCE [LARGE SCALE GENOMIC DNA]</scope>
    <source>
        <strain>197N</strain>
    </source>
</reference>
<dbReference type="EMBL" id="AM167904">
    <property type="protein sequence ID" value="CAJ49782.1"/>
    <property type="molecule type" value="Genomic_DNA"/>
</dbReference>
<dbReference type="RefSeq" id="WP_005012641.1">
    <property type="nucleotide sequence ID" value="NC_010645.1"/>
</dbReference>
<dbReference type="SMR" id="Q2KZ21"/>
<dbReference type="STRING" id="360910.BAV2173"/>
<dbReference type="GeneID" id="93120720"/>
<dbReference type="KEGG" id="bav:BAV2173"/>
<dbReference type="eggNOG" id="COG0238">
    <property type="taxonomic scope" value="Bacteria"/>
</dbReference>
<dbReference type="HOGENOM" id="CLU_148710_0_3_4"/>
<dbReference type="OrthoDB" id="9812008at2"/>
<dbReference type="Proteomes" id="UP000001977">
    <property type="component" value="Chromosome"/>
</dbReference>
<dbReference type="GO" id="GO:0022627">
    <property type="term" value="C:cytosolic small ribosomal subunit"/>
    <property type="evidence" value="ECO:0007669"/>
    <property type="project" value="TreeGrafter"/>
</dbReference>
<dbReference type="GO" id="GO:0070181">
    <property type="term" value="F:small ribosomal subunit rRNA binding"/>
    <property type="evidence" value="ECO:0007669"/>
    <property type="project" value="TreeGrafter"/>
</dbReference>
<dbReference type="GO" id="GO:0003735">
    <property type="term" value="F:structural constituent of ribosome"/>
    <property type="evidence" value="ECO:0007669"/>
    <property type="project" value="InterPro"/>
</dbReference>
<dbReference type="GO" id="GO:0006412">
    <property type="term" value="P:translation"/>
    <property type="evidence" value="ECO:0007669"/>
    <property type="project" value="UniProtKB-UniRule"/>
</dbReference>
<dbReference type="Gene3D" id="4.10.640.10">
    <property type="entry name" value="Ribosomal protein S18"/>
    <property type="match status" value="1"/>
</dbReference>
<dbReference type="HAMAP" id="MF_00270">
    <property type="entry name" value="Ribosomal_bS18"/>
    <property type="match status" value="1"/>
</dbReference>
<dbReference type="InterPro" id="IPR001648">
    <property type="entry name" value="Ribosomal_bS18"/>
</dbReference>
<dbReference type="InterPro" id="IPR018275">
    <property type="entry name" value="Ribosomal_bS18_CS"/>
</dbReference>
<dbReference type="InterPro" id="IPR036870">
    <property type="entry name" value="Ribosomal_bS18_sf"/>
</dbReference>
<dbReference type="NCBIfam" id="TIGR00165">
    <property type="entry name" value="S18"/>
    <property type="match status" value="1"/>
</dbReference>
<dbReference type="PANTHER" id="PTHR13479">
    <property type="entry name" value="30S RIBOSOMAL PROTEIN S18"/>
    <property type="match status" value="1"/>
</dbReference>
<dbReference type="PANTHER" id="PTHR13479:SF40">
    <property type="entry name" value="SMALL RIBOSOMAL SUBUNIT PROTEIN BS18M"/>
    <property type="match status" value="1"/>
</dbReference>
<dbReference type="Pfam" id="PF01084">
    <property type="entry name" value="Ribosomal_S18"/>
    <property type="match status" value="1"/>
</dbReference>
<dbReference type="PRINTS" id="PR00974">
    <property type="entry name" value="RIBOSOMALS18"/>
</dbReference>
<dbReference type="SUPFAM" id="SSF46911">
    <property type="entry name" value="Ribosomal protein S18"/>
    <property type="match status" value="1"/>
</dbReference>
<dbReference type="PROSITE" id="PS00057">
    <property type="entry name" value="RIBOSOMAL_S18"/>
    <property type="match status" value="1"/>
</dbReference>
<keyword id="KW-1185">Reference proteome</keyword>
<keyword id="KW-0687">Ribonucleoprotein</keyword>
<keyword id="KW-0689">Ribosomal protein</keyword>
<keyword id="KW-0694">RNA-binding</keyword>
<keyword id="KW-0699">rRNA-binding</keyword>
<feature type="chain" id="PRO_1000003449" description="Small ribosomal subunit protein bS18">
    <location>
        <begin position="1"/>
        <end position="90"/>
    </location>
</feature>
<accession>Q2KZ21</accession>
<evidence type="ECO:0000255" key="1">
    <source>
        <dbReference type="HAMAP-Rule" id="MF_00270"/>
    </source>
</evidence>
<evidence type="ECO:0000305" key="2"/>
<gene>
    <name evidence="1" type="primary">rpsR</name>
    <name type="ordered locus">BAV2173</name>
</gene>
<comment type="function">
    <text evidence="1">Binds as a heterodimer with protein bS6 to the central domain of the 16S rRNA, where it helps stabilize the platform of the 30S subunit.</text>
</comment>
<comment type="subunit">
    <text evidence="1">Part of the 30S ribosomal subunit. Forms a tight heterodimer with protein bS6.</text>
</comment>
<comment type="similarity">
    <text evidence="1">Belongs to the bacterial ribosomal protein bS18 family.</text>
</comment>
<protein>
    <recommendedName>
        <fullName evidence="1">Small ribosomal subunit protein bS18</fullName>
    </recommendedName>
    <alternativeName>
        <fullName evidence="2">30S ribosomal protein S18</fullName>
    </alternativeName>
</protein>
<organism>
    <name type="scientific">Bordetella avium (strain 197N)</name>
    <dbReference type="NCBI Taxonomy" id="360910"/>
    <lineage>
        <taxon>Bacteria</taxon>
        <taxon>Pseudomonadati</taxon>
        <taxon>Pseudomonadota</taxon>
        <taxon>Betaproteobacteria</taxon>
        <taxon>Burkholderiales</taxon>
        <taxon>Alcaligenaceae</taxon>
        <taxon>Bordetella</taxon>
    </lineage>
</organism>